<organism>
    <name type="scientific">Aliivibrio fischeri (strain MJ11)</name>
    <name type="common">Vibrio fischeri</name>
    <dbReference type="NCBI Taxonomy" id="388396"/>
    <lineage>
        <taxon>Bacteria</taxon>
        <taxon>Pseudomonadati</taxon>
        <taxon>Pseudomonadota</taxon>
        <taxon>Gammaproteobacteria</taxon>
        <taxon>Vibrionales</taxon>
        <taxon>Vibrionaceae</taxon>
        <taxon>Aliivibrio</taxon>
    </lineage>
</organism>
<sequence length="597" mass="65851">MKHIRNFSIIAHIDHGKSTLSDRLIQVCGGLSDREMAAQVLDSMDLERERGITIKAQSVTLDYTAKDGETYQLNFIDTPGHVDFSYEVSRSLAACEGALLVVDAGQGVEAQTLANCYTAIEMDLEVVPILNKIDLPAADPDRVAEEIEEIVGIDATDATRCSAKTGLGVDEVLETIVKSIPAPEGDPDAPTQALIIDSWFDNYLGVVSLVRIKNGSLKKNDKIKVMSTGQVWGIDRIGIFTPKQIDTDVLNTGEVGWVVCGIKDILGAPVGDTLTHAKGGCEERLPGFQKVKPQVYAGLFPVSSDDYENFRDALGKLSLNDASLFYEPESSAALGFGFRCGFLGMLHMEIIQERLEREYDLDLITTAPTVVYEVVLNNGDLLYVDSPSKLPAVNDLDEIREPIARCNILVPADYLGNVISLCVEKRGVQVDMVYHGNQVALTYDIPMSEVVLDFFDRLKSTSRGYASLDYNFQRYEASNMVRVDVLINGDRVDALAIITHHDNAQGRGRLLVEKMKEFIPRQMFDIAIQAAIGAHIIARSTVKQLRKNVIAKCYGGDISRKKKLLKKQKEGKKRMKQIGNVELPQEAFLAILHVGKD</sequence>
<protein>
    <recommendedName>
        <fullName evidence="1">Elongation factor 4</fullName>
        <shortName evidence="1">EF-4</shortName>
        <ecNumber evidence="1">3.6.5.n1</ecNumber>
    </recommendedName>
    <alternativeName>
        <fullName evidence="1">Ribosomal back-translocase LepA</fullName>
    </alternativeName>
</protein>
<keyword id="KW-0997">Cell inner membrane</keyword>
<keyword id="KW-1003">Cell membrane</keyword>
<keyword id="KW-0342">GTP-binding</keyword>
<keyword id="KW-0378">Hydrolase</keyword>
<keyword id="KW-0472">Membrane</keyword>
<keyword id="KW-0547">Nucleotide-binding</keyword>
<keyword id="KW-0648">Protein biosynthesis</keyword>
<comment type="function">
    <text evidence="1">Required for accurate and efficient protein synthesis under certain stress conditions. May act as a fidelity factor of the translation reaction, by catalyzing a one-codon backward translocation of tRNAs on improperly translocated ribosomes. Back-translocation proceeds from a post-translocation (POST) complex to a pre-translocation (PRE) complex, thus giving elongation factor G a second chance to translocate the tRNAs correctly. Binds to ribosomes in a GTP-dependent manner.</text>
</comment>
<comment type="catalytic activity">
    <reaction evidence="1">
        <text>GTP + H2O = GDP + phosphate + H(+)</text>
        <dbReference type="Rhea" id="RHEA:19669"/>
        <dbReference type="ChEBI" id="CHEBI:15377"/>
        <dbReference type="ChEBI" id="CHEBI:15378"/>
        <dbReference type="ChEBI" id="CHEBI:37565"/>
        <dbReference type="ChEBI" id="CHEBI:43474"/>
        <dbReference type="ChEBI" id="CHEBI:58189"/>
        <dbReference type="EC" id="3.6.5.n1"/>
    </reaction>
</comment>
<comment type="subcellular location">
    <subcellularLocation>
        <location evidence="1">Cell inner membrane</location>
        <topology evidence="1">Peripheral membrane protein</topology>
        <orientation evidence="1">Cytoplasmic side</orientation>
    </subcellularLocation>
</comment>
<comment type="similarity">
    <text evidence="1">Belongs to the TRAFAC class translation factor GTPase superfamily. Classic translation factor GTPase family. LepA subfamily.</text>
</comment>
<accession>B5FAH2</accession>
<evidence type="ECO:0000255" key="1">
    <source>
        <dbReference type="HAMAP-Rule" id="MF_00071"/>
    </source>
</evidence>
<proteinExistence type="inferred from homology"/>
<reference key="1">
    <citation type="submission" date="2008-08" db="EMBL/GenBank/DDBJ databases">
        <title>Complete sequence of Vibrio fischeri strain MJ11.</title>
        <authorList>
            <person name="Mandel M.J."/>
            <person name="Stabb E.V."/>
            <person name="Ruby E.G."/>
            <person name="Ferriera S."/>
            <person name="Johnson J."/>
            <person name="Kravitz S."/>
            <person name="Beeson K."/>
            <person name="Sutton G."/>
            <person name="Rogers Y.-H."/>
            <person name="Friedman R."/>
            <person name="Frazier M."/>
            <person name="Venter J.C."/>
        </authorList>
    </citation>
    <scope>NUCLEOTIDE SEQUENCE [LARGE SCALE GENOMIC DNA]</scope>
    <source>
        <strain>MJ11</strain>
    </source>
</reference>
<gene>
    <name evidence="1" type="primary">lepA</name>
    <name type="ordered locus">VFMJ11_2194</name>
</gene>
<feature type="chain" id="PRO_1000092461" description="Elongation factor 4">
    <location>
        <begin position="1"/>
        <end position="597"/>
    </location>
</feature>
<feature type="domain" description="tr-type G">
    <location>
        <begin position="2"/>
        <end position="184"/>
    </location>
</feature>
<feature type="binding site" evidence="1">
    <location>
        <begin position="14"/>
        <end position="19"/>
    </location>
    <ligand>
        <name>GTP</name>
        <dbReference type="ChEBI" id="CHEBI:37565"/>
    </ligand>
</feature>
<feature type="binding site" evidence="1">
    <location>
        <begin position="131"/>
        <end position="134"/>
    </location>
    <ligand>
        <name>GTP</name>
        <dbReference type="ChEBI" id="CHEBI:37565"/>
    </ligand>
</feature>
<dbReference type="EC" id="3.6.5.n1" evidence="1"/>
<dbReference type="EMBL" id="CP001139">
    <property type="protein sequence ID" value="ACH67036.1"/>
    <property type="molecule type" value="Genomic_DNA"/>
</dbReference>
<dbReference type="RefSeq" id="WP_005420718.1">
    <property type="nucleotide sequence ID" value="NC_011184.1"/>
</dbReference>
<dbReference type="SMR" id="B5FAH2"/>
<dbReference type="KEGG" id="vfm:VFMJ11_2194"/>
<dbReference type="HOGENOM" id="CLU_009995_3_3_6"/>
<dbReference type="Proteomes" id="UP000001857">
    <property type="component" value="Chromosome I"/>
</dbReference>
<dbReference type="GO" id="GO:0005886">
    <property type="term" value="C:plasma membrane"/>
    <property type="evidence" value="ECO:0007669"/>
    <property type="project" value="UniProtKB-SubCell"/>
</dbReference>
<dbReference type="GO" id="GO:0005525">
    <property type="term" value="F:GTP binding"/>
    <property type="evidence" value="ECO:0007669"/>
    <property type="project" value="UniProtKB-UniRule"/>
</dbReference>
<dbReference type="GO" id="GO:0003924">
    <property type="term" value="F:GTPase activity"/>
    <property type="evidence" value="ECO:0007669"/>
    <property type="project" value="UniProtKB-UniRule"/>
</dbReference>
<dbReference type="GO" id="GO:0097216">
    <property type="term" value="F:guanosine tetraphosphate binding"/>
    <property type="evidence" value="ECO:0007669"/>
    <property type="project" value="UniProtKB-ARBA"/>
</dbReference>
<dbReference type="GO" id="GO:0043022">
    <property type="term" value="F:ribosome binding"/>
    <property type="evidence" value="ECO:0007669"/>
    <property type="project" value="UniProtKB-UniRule"/>
</dbReference>
<dbReference type="GO" id="GO:0003746">
    <property type="term" value="F:translation elongation factor activity"/>
    <property type="evidence" value="ECO:0007669"/>
    <property type="project" value="UniProtKB-UniRule"/>
</dbReference>
<dbReference type="GO" id="GO:0045727">
    <property type="term" value="P:positive regulation of translation"/>
    <property type="evidence" value="ECO:0007669"/>
    <property type="project" value="UniProtKB-UniRule"/>
</dbReference>
<dbReference type="CDD" id="cd03699">
    <property type="entry name" value="EF4_II"/>
    <property type="match status" value="1"/>
</dbReference>
<dbReference type="CDD" id="cd16260">
    <property type="entry name" value="EF4_III"/>
    <property type="match status" value="1"/>
</dbReference>
<dbReference type="CDD" id="cd01890">
    <property type="entry name" value="LepA"/>
    <property type="match status" value="1"/>
</dbReference>
<dbReference type="CDD" id="cd03709">
    <property type="entry name" value="lepA_C"/>
    <property type="match status" value="1"/>
</dbReference>
<dbReference type="FunFam" id="3.40.50.300:FF:000078">
    <property type="entry name" value="Elongation factor 4"/>
    <property type="match status" value="1"/>
</dbReference>
<dbReference type="FunFam" id="2.40.30.10:FF:000015">
    <property type="entry name" value="Translation factor GUF1, mitochondrial"/>
    <property type="match status" value="1"/>
</dbReference>
<dbReference type="FunFam" id="3.30.70.240:FF:000007">
    <property type="entry name" value="Translation factor GUF1, mitochondrial"/>
    <property type="match status" value="1"/>
</dbReference>
<dbReference type="FunFam" id="3.30.70.2570:FF:000001">
    <property type="entry name" value="Translation factor GUF1, mitochondrial"/>
    <property type="match status" value="1"/>
</dbReference>
<dbReference type="FunFam" id="3.30.70.870:FF:000004">
    <property type="entry name" value="Translation factor GUF1, mitochondrial"/>
    <property type="match status" value="1"/>
</dbReference>
<dbReference type="Gene3D" id="3.30.70.240">
    <property type="match status" value="1"/>
</dbReference>
<dbReference type="Gene3D" id="3.30.70.2570">
    <property type="entry name" value="Elongation factor 4, C-terminal domain"/>
    <property type="match status" value="1"/>
</dbReference>
<dbReference type="Gene3D" id="3.30.70.870">
    <property type="entry name" value="Elongation Factor G (Translational Gtpase), domain 3"/>
    <property type="match status" value="1"/>
</dbReference>
<dbReference type="Gene3D" id="3.40.50.300">
    <property type="entry name" value="P-loop containing nucleotide triphosphate hydrolases"/>
    <property type="match status" value="1"/>
</dbReference>
<dbReference type="Gene3D" id="2.40.30.10">
    <property type="entry name" value="Translation factors"/>
    <property type="match status" value="1"/>
</dbReference>
<dbReference type="HAMAP" id="MF_00071">
    <property type="entry name" value="LepA"/>
    <property type="match status" value="1"/>
</dbReference>
<dbReference type="InterPro" id="IPR006297">
    <property type="entry name" value="EF-4"/>
</dbReference>
<dbReference type="InterPro" id="IPR035647">
    <property type="entry name" value="EFG_III/V"/>
</dbReference>
<dbReference type="InterPro" id="IPR000640">
    <property type="entry name" value="EFG_V-like"/>
</dbReference>
<dbReference type="InterPro" id="IPR004161">
    <property type="entry name" value="EFTu-like_2"/>
</dbReference>
<dbReference type="InterPro" id="IPR031157">
    <property type="entry name" value="G_TR_CS"/>
</dbReference>
<dbReference type="InterPro" id="IPR038363">
    <property type="entry name" value="LepA_C_sf"/>
</dbReference>
<dbReference type="InterPro" id="IPR013842">
    <property type="entry name" value="LepA_CTD"/>
</dbReference>
<dbReference type="InterPro" id="IPR035654">
    <property type="entry name" value="LepA_IV"/>
</dbReference>
<dbReference type="InterPro" id="IPR027417">
    <property type="entry name" value="P-loop_NTPase"/>
</dbReference>
<dbReference type="InterPro" id="IPR005225">
    <property type="entry name" value="Small_GTP-bd"/>
</dbReference>
<dbReference type="InterPro" id="IPR000795">
    <property type="entry name" value="T_Tr_GTP-bd_dom"/>
</dbReference>
<dbReference type="InterPro" id="IPR009000">
    <property type="entry name" value="Transl_B-barrel_sf"/>
</dbReference>
<dbReference type="NCBIfam" id="TIGR01393">
    <property type="entry name" value="lepA"/>
    <property type="match status" value="1"/>
</dbReference>
<dbReference type="NCBIfam" id="TIGR00231">
    <property type="entry name" value="small_GTP"/>
    <property type="match status" value="1"/>
</dbReference>
<dbReference type="PANTHER" id="PTHR43512:SF4">
    <property type="entry name" value="TRANSLATION FACTOR GUF1 HOMOLOG, CHLOROPLASTIC"/>
    <property type="match status" value="1"/>
</dbReference>
<dbReference type="PANTHER" id="PTHR43512">
    <property type="entry name" value="TRANSLATION FACTOR GUF1-RELATED"/>
    <property type="match status" value="1"/>
</dbReference>
<dbReference type="Pfam" id="PF00679">
    <property type="entry name" value="EFG_C"/>
    <property type="match status" value="1"/>
</dbReference>
<dbReference type="Pfam" id="PF00009">
    <property type="entry name" value="GTP_EFTU"/>
    <property type="match status" value="1"/>
</dbReference>
<dbReference type="Pfam" id="PF03144">
    <property type="entry name" value="GTP_EFTU_D2"/>
    <property type="match status" value="1"/>
</dbReference>
<dbReference type="Pfam" id="PF06421">
    <property type="entry name" value="LepA_C"/>
    <property type="match status" value="1"/>
</dbReference>
<dbReference type="PRINTS" id="PR00315">
    <property type="entry name" value="ELONGATNFCT"/>
</dbReference>
<dbReference type="SMART" id="SM00838">
    <property type="entry name" value="EFG_C"/>
    <property type="match status" value="1"/>
</dbReference>
<dbReference type="SUPFAM" id="SSF54980">
    <property type="entry name" value="EF-G C-terminal domain-like"/>
    <property type="match status" value="2"/>
</dbReference>
<dbReference type="SUPFAM" id="SSF52540">
    <property type="entry name" value="P-loop containing nucleoside triphosphate hydrolases"/>
    <property type="match status" value="1"/>
</dbReference>
<dbReference type="SUPFAM" id="SSF50447">
    <property type="entry name" value="Translation proteins"/>
    <property type="match status" value="1"/>
</dbReference>
<dbReference type="PROSITE" id="PS00301">
    <property type="entry name" value="G_TR_1"/>
    <property type="match status" value="1"/>
</dbReference>
<dbReference type="PROSITE" id="PS51722">
    <property type="entry name" value="G_TR_2"/>
    <property type="match status" value="1"/>
</dbReference>
<name>LEPA_ALIFM</name>